<feature type="chain" id="PRO_1000021329" description="Shikimate dehydrogenase (NADP(+))">
    <location>
        <begin position="1"/>
        <end position="272"/>
    </location>
</feature>
<feature type="active site" description="Proton acceptor" evidence="1">
    <location>
        <position position="65"/>
    </location>
</feature>
<feature type="binding site" evidence="1">
    <location>
        <begin position="14"/>
        <end position="16"/>
    </location>
    <ligand>
        <name>shikimate</name>
        <dbReference type="ChEBI" id="CHEBI:36208"/>
    </ligand>
</feature>
<feature type="binding site" evidence="1">
    <location>
        <position position="61"/>
    </location>
    <ligand>
        <name>shikimate</name>
        <dbReference type="ChEBI" id="CHEBI:36208"/>
    </ligand>
</feature>
<feature type="binding site" evidence="1">
    <location>
        <position position="77"/>
    </location>
    <ligand>
        <name>NADP(+)</name>
        <dbReference type="ChEBI" id="CHEBI:58349"/>
    </ligand>
</feature>
<feature type="binding site" evidence="1">
    <location>
        <position position="86"/>
    </location>
    <ligand>
        <name>shikimate</name>
        <dbReference type="ChEBI" id="CHEBI:36208"/>
    </ligand>
</feature>
<feature type="binding site" evidence="1">
    <location>
        <position position="102"/>
    </location>
    <ligand>
        <name>shikimate</name>
        <dbReference type="ChEBI" id="CHEBI:36208"/>
    </ligand>
</feature>
<feature type="binding site" evidence="1">
    <location>
        <begin position="126"/>
        <end position="130"/>
    </location>
    <ligand>
        <name>NADP(+)</name>
        <dbReference type="ChEBI" id="CHEBI:58349"/>
    </ligand>
</feature>
<feature type="binding site" evidence="1">
    <location>
        <begin position="149"/>
        <end position="154"/>
    </location>
    <ligand>
        <name>NADP(+)</name>
        <dbReference type="ChEBI" id="CHEBI:58349"/>
    </ligand>
</feature>
<feature type="binding site" evidence="1">
    <location>
        <position position="213"/>
    </location>
    <ligand>
        <name>NADP(+)</name>
        <dbReference type="ChEBI" id="CHEBI:58349"/>
    </ligand>
</feature>
<feature type="binding site" evidence="1">
    <location>
        <position position="215"/>
    </location>
    <ligand>
        <name>shikimate</name>
        <dbReference type="ChEBI" id="CHEBI:36208"/>
    </ligand>
</feature>
<feature type="binding site" evidence="1">
    <location>
        <position position="237"/>
    </location>
    <ligand>
        <name>NADP(+)</name>
        <dbReference type="ChEBI" id="CHEBI:58349"/>
    </ligand>
</feature>
<evidence type="ECO:0000255" key="1">
    <source>
        <dbReference type="HAMAP-Rule" id="MF_00222"/>
    </source>
</evidence>
<dbReference type="EC" id="1.1.1.25" evidence="1"/>
<dbReference type="EMBL" id="CP000026">
    <property type="protein sequence ID" value="AAV79084.1"/>
    <property type="molecule type" value="Genomic_DNA"/>
</dbReference>
<dbReference type="RefSeq" id="WP_000409176.1">
    <property type="nucleotide sequence ID" value="NC_006511.1"/>
</dbReference>
<dbReference type="SMR" id="Q5PIS9"/>
<dbReference type="KEGG" id="spt:SPA3268"/>
<dbReference type="HOGENOM" id="CLU_044063_2_1_6"/>
<dbReference type="UniPathway" id="UPA00053">
    <property type="reaction ID" value="UER00087"/>
</dbReference>
<dbReference type="Proteomes" id="UP000008185">
    <property type="component" value="Chromosome"/>
</dbReference>
<dbReference type="GO" id="GO:0005829">
    <property type="term" value="C:cytosol"/>
    <property type="evidence" value="ECO:0007669"/>
    <property type="project" value="TreeGrafter"/>
</dbReference>
<dbReference type="GO" id="GO:0050661">
    <property type="term" value="F:NADP binding"/>
    <property type="evidence" value="ECO:0007669"/>
    <property type="project" value="InterPro"/>
</dbReference>
<dbReference type="GO" id="GO:0004764">
    <property type="term" value="F:shikimate 3-dehydrogenase (NADP+) activity"/>
    <property type="evidence" value="ECO:0007669"/>
    <property type="project" value="UniProtKB-UniRule"/>
</dbReference>
<dbReference type="GO" id="GO:0008652">
    <property type="term" value="P:amino acid biosynthetic process"/>
    <property type="evidence" value="ECO:0007669"/>
    <property type="project" value="UniProtKB-KW"/>
</dbReference>
<dbReference type="GO" id="GO:0009073">
    <property type="term" value="P:aromatic amino acid family biosynthetic process"/>
    <property type="evidence" value="ECO:0007669"/>
    <property type="project" value="UniProtKB-KW"/>
</dbReference>
<dbReference type="GO" id="GO:0009423">
    <property type="term" value="P:chorismate biosynthetic process"/>
    <property type="evidence" value="ECO:0007669"/>
    <property type="project" value="UniProtKB-UniRule"/>
</dbReference>
<dbReference type="GO" id="GO:0019632">
    <property type="term" value="P:shikimate metabolic process"/>
    <property type="evidence" value="ECO:0007669"/>
    <property type="project" value="InterPro"/>
</dbReference>
<dbReference type="CDD" id="cd01065">
    <property type="entry name" value="NAD_bind_Shikimate_DH"/>
    <property type="match status" value="1"/>
</dbReference>
<dbReference type="FunFam" id="3.40.50.10860:FF:000006">
    <property type="entry name" value="Shikimate dehydrogenase (NADP(+))"/>
    <property type="match status" value="1"/>
</dbReference>
<dbReference type="FunFam" id="3.40.50.720:FF:000104">
    <property type="entry name" value="Shikimate dehydrogenase (NADP(+))"/>
    <property type="match status" value="1"/>
</dbReference>
<dbReference type="Gene3D" id="3.40.50.10860">
    <property type="entry name" value="Leucine Dehydrogenase, chain A, domain 1"/>
    <property type="match status" value="1"/>
</dbReference>
<dbReference type="Gene3D" id="3.40.50.720">
    <property type="entry name" value="NAD(P)-binding Rossmann-like Domain"/>
    <property type="match status" value="1"/>
</dbReference>
<dbReference type="HAMAP" id="MF_00222">
    <property type="entry name" value="Shikimate_DH_AroE"/>
    <property type="match status" value="1"/>
</dbReference>
<dbReference type="InterPro" id="IPR046346">
    <property type="entry name" value="Aminoacid_DH-like_N_sf"/>
</dbReference>
<dbReference type="InterPro" id="IPR036291">
    <property type="entry name" value="NAD(P)-bd_dom_sf"/>
</dbReference>
<dbReference type="InterPro" id="IPR041121">
    <property type="entry name" value="SDH_C"/>
</dbReference>
<dbReference type="InterPro" id="IPR011342">
    <property type="entry name" value="Shikimate_DH"/>
</dbReference>
<dbReference type="InterPro" id="IPR013708">
    <property type="entry name" value="Shikimate_DH-bd_N"/>
</dbReference>
<dbReference type="InterPro" id="IPR022893">
    <property type="entry name" value="Shikimate_DH_fam"/>
</dbReference>
<dbReference type="InterPro" id="IPR006151">
    <property type="entry name" value="Shikm_DH/Glu-tRNA_Rdtase"/>
</dbReference>
<dbReference type="NCBIfam" id="TIGR00507">
    <property type="entry name" value="aroE"/>
    <property type="match status" value="1"/>
</dbReference>
<dbReference type="NCBIfam" id="NF001310">
    <property type="entry name" value="PRK00258.1-2"/>
    <property type="match status" value="1"/>
</dbReference>
<dbReference type="PANTHER" id="PTHR21089:SF1">
    <property type="entry name" value="BIFUNCTIONAL 3-DEHYDROQUINATE DEHYDRATASE_SHIKIMATE DEHYDROGENASE, CHLOROPLASTIC"/>
    <property type="match status" value="1"/>
</dbReference>
<dbReference type="PANTHER" id="PTHR21089">
    <property type="entry name" value="SHIKIMATE DEHYDROGENASE"/>
    <property type="match status" value="1"/>
</dbReference>
<dbReference type="Pfam" id="PF18317">
    <property type="entry name" value="SDH_C"/>
    <property type="match status" value="1"/>
</dbReference>
<dbReference type="Pfam" id="PF01488">
    <property type="entry name" value="Shikimate_DH"/>
    <property type="match status" value="1"/>
</dbReference>
<dbReference type="Pfam" id="PF08501">
    <property type="entry name" value="Shikimate_dh_N"/>
    <property type="match status" value="1"/>
</dbReference>
<dbReference type="SUPFAM" id="SSF53223">
    <property type="entry name" value="Aminoacid dehydrogenase-like, N-terminal domain"/>
    <property type="match status" value="1"/>
</dbReference>
<dbReference type="SUPFAM" id="SSF51735">
    <property type="entry name" value="NAD(P)-binding Rossmann-fold domains"/>
    <property type="match status" value="1"/>
</dbReference>
<gene>
    <name evidence="1" type="primary">aroE</name>
    <name type="ordered locus">SPA3268</name>
</gene>
<accession>Q5PIS9</accession>
<reference key="1">
    <citation type="journal article" date="2004" name="Nat. Genet.">
        <title>Comparison of genome degradation in Paratyphi A and Typhi, human-restricted serovars of Salmonella enterica that cause typhoid.</title>
        <authorList>
            <person name="McClelland M."/>
            <person name="Sanderson K.E."/>
            <person name="Clifton S.W."/>
            <person name="Latreille P."/>
            <person name="Porwollik S."/>
            <person name="Sabo A."/>
            <person name="Meyer R."/>
            <person name="Bieri T."/>
            <person name="Ozersky P."/>
            <person name="McLellan M."/>
            <person name="Harkins C.R."/>
            <person name="Wang C."/>
            <person name="Nguyen C."/>
            <person name="Berghoff A."/>
            <person name="Elliott G."/>
            <person name="Kohlberg S."/>
            <person name="Strong C."/>
            <person name="Du F."/>
            <person name="Carter J."/>
            <person name="Kremizki C."/>
            <person name="Layman D."/>
            <person name="Leonard S."/>
            <person name="Sun H."/>
            <person name="Fulton L."/>
            <person name="Nash W."/>
            <person name="Miner T."/>
            <person name="Minx P."/>
            <person name="Delehaunty K."/>
            <person name="Fronick C."/>
            <person name="Magrini V."/>
            <person name="Nhan M."/>
            <person name="Warren W."/>
            <person name="Florea L."/>
            <person name="Spieth J."/>
            <person name="Wilson R.K."/>
        </authorList>
    </citation>
    <scope>NUCLEOTIDE SEQUENCE [LARGE SCALE GENOMIC DNA]</scope>
    <source>
        <strain>ATCC 9150 / SARB42</strain>
    </source>
</reference>
<protein>
    <recommendedName>
        <fullName evidence="1">Shikimate dehydrogenase (NADP(+))</fullName>
        <shortName evidence="1">SDH</shortName>
        <ecNumber evidence="1">1.1.1.25</ecNumber>
    </recommendedName>
</protein>
<proteinExistence type="inferred from homology"/>
<keyword id="KW-0028">Amino-acid biosynthesis</keyword>
<keyword id="KW-0057">Aromatic amino acid biosynthesis</keyword>
<keyword id="KW-0521">NADP</keyword>
<keyword id="KW-0560">Oxidoreductase</keyword>
<sequence length="272" mass="29317">MEIYAVFGNPIAHSKSPFIHQQFAQQLDIVHPYGRVLAPINNFINTLDAFFAAGGKGANITVPFKEEAFARSDELTERASLAGAVNTLKRLEDGRLLGDNTDGIGLLSDLERLNFIRPGLRILLIGAGGASRGVLLPLLSLDCAVTITNRTASRAEALAKIFAHTGSVHATDMDKLDGCEFDLIINATSSGIRGEIPAIPASLIHPSLCCYDMFYQKGNTPFLSWCVQQGAKRYADGLGMLVGQAAHAVLLWHGVLPQVEPVIELLQQELLA</sequence>
<comment type="function">
    <text evidence="1">Involved in the biosynthesis of the chorismate, which leads to the biosynthesis of aromatic amino acids. Catalyzes the reversible NADPH linked reduction of 3-dehydroshikimate (DHSA) to yield shikimate (SA).</text>
</comment>
<comment type="catalytic activity">
    <reaction evidence="1">
        <text>shikimate + NADP(+) = 3-dehydroshikimate + NADPH + H(+)</text>
        <dbReference type="Rhea" id="RHEA:17737"/>
        <dbReference type="ChEBI" id="CHEBI:15378"/>
        <dbReference type="ChEBI" id="CHEBI:16630"/>
        <dbReference type="ChEBI" id="CHEBI:36208"/>
        <dbReference type="ChEBI" id="CHEBI:57783"/>
        <dbReference type="ChEBI" id="CHEBI:58349"/>
        <dbReference type="EC" id="1.1.1.25"/>
    </reaction>
</comment>
<comment type="pathway">
    <text evidence="1">Metabolic intermediate biosynthesis; chorismate biosynthesis; chorismate from D-erythrose 4-phosphate and phosphoenolpyruvate: step 4/7.</text>
</comment>
<comment type="subunit">
    <text evidence="1">Homodimer.</text>
</comment>
<comment type="similarity">
    <text evidence="1">Belongs to the shikimate dehydrogenase family.</text>
</comment>
<name>AROE_SALPA</name>
<organism>
    <name type="scientific">Salmonella paratyphi A (strain ATCC 9150 / SARB42)</name>
    <dbReference type="NCBI Taxonomy" id="295319"/>
    <lineage>
        <taxon>Bacteria</taxon>
        <taxon>Pseudomonadati</taxon>
        <taxon>Pseudomonadota</taxon>
        <taxon>Gammaproteobacteria</taxon>
        <taxon>Enterobacterales</taxon>
        <taxon>Enterobacteriaceae</taxon>
        <taxon>Salmonella</taxon>
    </lineage>
</organism>